<sequence>MRIIPAIDLKDGQCVRLFKGDMDQNTVYSDNPGETAKQWAEQGAERMHVVDLNGAFAGEPVNADAIAAIRKAITIPMQLGGGIRTLETLQKLFNLGVDFAILGSVAARDPELVFRACEQFPGRISVGIDARDGKVAVEGWAETTDLNAVDLAKKFEDAGVAEIIFTDIARDGTLTGPNVAATRLMAESATIPVIASGGVSCLADIQALLENSGPYPNGNRISGVITGKAIYDGRLDLAAAIALSRRWEN</sequence>
<accession>A0LCF2</accession>
<protein>
    <recommendedName>
        <fullName evidence="1">1-(5-phosphoribosyl)-5-[(5-phosphoribosylamino)methylideneamino] imidazole-4-carboxamide isomerase</fullName>
        <ecNumber evidence="1">5.3.1.16</ecNumber>
    </recommendedName>
    <alternativeName>
        <fullName evidence="1">Phosphoribosylformimino-5-aminoimidazole carboxamide ribotide isomerase</fullName>
    </alternativeName>
</protein>
<evidence type="ECO:0000255" key="1">
    <source>
        <dbReference type="HAMAP-Rule" id="MF_01014"/>
    </source>
</evidence>
<feature type="chain" id="PRO_0000290490" description="1-(5-phosphoribosyl)-5-[(5-phosphoribosylamino)methylideneamino] imidazole-4-carboxamide isomerase">
    <location>
        <begin position="1"/>
        <end position="249"/>
    </location>
</feature>
<feature type="active site" description="Proton acceptor" evidence="1">
    <location>
        <position position="8"/>
    </location>
</feature>
<feature type="active site" description="Proton donor" evidence="1">
    <location>
        <position position="129"/>
    </location>
</feature>
<keyword id="KW-0028">Amino-acid biosynthesis</keyword>
<keyword id="KW-0963">Cytoplasm</keyword>
<keyword id="KW-0368">Histidine biosynthesis</keyword>
<keyword id="KW-0413">Isomerase</keyword>
<keyword id="KW-1185">Reference proteome</keyword>
<name>HIS4_MAGMM</name>
<organism>
    <name type="scientific">Magnetococcus marinus (strain ATCC BAA-1437 / JCM 17883 / MC-1)</name>
    <dbReference type="NCBI Taxonomy" id="156889"/>
    <lineage>
        <taxon>Bacteria</taxon>
        <taxon>Pseudomonadati</taxon>
        <taxon>Pseudomonadota</taxon>
        <taxon>Alphaproteobacteria</taxon>
        <taxon>Magnetococcales</taxon>
        <taxon>Magnetococcaceae</taxon>
        <taxon>Magnetococcus</taxon>
    </lineage>
</organism>
<gene>
    <name evidence="1" type="primary">hisA</name>
    <name type="ordered locus">Mmc1_3155</name>
</gene>
<proteinExistence type="inferred from homology"/>
<comment type="catalytic activity">
    <reaction evidence="1">
        <text>1-(5-phospho-beta-D-ribosyl)-5-[(5-phospho-beta-D-ribosylamino)methylideneamino]imidazole-4-carboxamide = 5-[(5-phospho-1-deoxy-D-ribulos-1-ylimino)methylamino]-1-(5-phospho-beta-D-ribosyl)imidazole-4-carboxamide</text>
        <dbReference type="Rhea" id="RHEA:15469"/>
        <dbReference type="ChEBI" id="CHEBI:58435"/>
        <dbReference type="ChEBI" id="CHEBI:58525"/>
        <dbReference type="EC" id="5.3.1.16"/>
    </reaction>
</comment>
<comment type="pathway">
    <text evidence="1">Amino-acid biosynthesis; L-histidine biosynthesis; L-histidine from 5-phospho-alpha-D-ribose 1-diphosphate: step 4/9.</text>
</comment>
<comment type="subcellular location">
    <subcellularLocation>
        <location evidence="1">Cytoplasm</location>
    </subcellularLocation>
</comment>
<comment type="similarity">
    <text evidence="1">Belongs to the HisA/HisF family.</text>
</comment>
<reference key="1">
    <citation type="journal article" date="2009" name="Appl. Environ. Microbiol.">
        <title>Complete genome sequence of the chemolithoautotrophic marine magnetotactic coccus strain MC-1.</title>
        <authorList>
            <person name="Schubbe S."/>
            <person name="Williams T.J."/>
            <person name="Xie G."/>
            <person name="Kiss H.E."/>
            <person name="Brettin T.S."/>
            <person name="Martinez D."/>
            <person name="Ross C.A."/>
            <person name="Schuler D."/>
            <person name="Cox B.L."/>
            <person name="Nealson K.H."/>
            <person name="Bazylinski D.A."/>
        </authorList>
    </citation>
    <scope>NUCLEOTIDE SEQUENCE [LARGE SCALE GENOMIC DNA]</scope>
    <source>
        <strain>ATCC BAA-1437 / JCM 17883 / MC-1</strain>
    </source>
</reference>
<dbReference type="EC" id="5.3.1.16" evidence="1"/>
<dbReference type="EMBL" id="CP000471">
    <property type="protein sequence ID" value="ABK45645.1"/>
    <property type="molecule type" value="Genomic_DNA"/>
</dbReference>
<dbReference type="RefSeq" id="WP_011714708.1">
    <property type="nucleotide sequence ID" value="NC_008576.1"/>
</dbReference>
<dbReference type="SMR" id="A0LCF2"/>
<dbReference type="STRING" id="156889.Mmc1_3155"/>
<dbReference type="KEGG" id="mgm:Mmc1_3155"/>
<dbReference type="eggNOG" id="COG0106">
    <property type="taxonomic scope" value="Bacteria"/>
</dbReference>
<dbReference type="HOGENOM" id="CLU_048577_1_1_5"/>
<dbReference type="OrthoDB" id="9807749at2"/>
<dbReference type="UniPathway" id="UPA00031">
    <property type="reaction ID" value="UER00009"/>
</dbReference>
<dbReference type="Proteomes" id="UP000002586">
    <property type="component" value="Chromosome"/>
</dbReference>
<dbReference type="GO" id="GO:0005737">
    <property type="term" value="C:cytoplasm"/>
    <property type="evidence" value="ECO:0007669"/>
    <property type="project" value="UniProtKB-SubCell"/>
</dbReference>
<dbReference type="GO" id="GO:0003949">
    <property type="term" value="F:1-(5-phosphoribosyl)-5-[(5-phosphoribosylamino)methylideneamino]imidazole-4-carboxamide isomerase activity"/>
    <property type="evidence" value="ECO:0007669"/>
    <property type="project" value="UniProtKB-UniRule"/>
</dbReference>
<dbReference type="GO" id="GO:0000105">
    <property type="term" value="P:L-histidine biosynthetic process"/>
    <property type="evidence" value="ECO:0007669"/>
    <property type="project" value="UniProtKB-UniRule"/>
</dbReference>
<dbReference type="GO" id="GO:0000162">
    <property type="term" value="P:L-tryptophan biosynthetic process"/>
    <property type="evidence" value="ECO:0007669"/>
    <property type="project" value="TreeGrafter"/>
</dbReference>
<dbReference type="CDD" id="cd04732">
    <property type="entry name" value="HisA"/>
    <property type="match status" value="1"/>
</dbReference>
<dbReference type="FunFam" id="3.20.20.70:FF:000009">
    <property type="entry name" value="1-(5-phosphoribosyl)-5-[(5-phosphoribosylamino)methylideneamino] imidazole-4-carboxamide isomerase"/>
    <property type="match status" value="1"/>
</dbReference>
<dbReference type="Gene3D" id="3.20.20.70">
    <property type="entry name" value="Aldolase class I"/>
    <property type="match status" value="1"/>
</dbReference>
<dbReference type="HAMAP" id="MF_01014">
    <property type="entry name" value="HisA"/>
    <property type="match status" value="1"/>
</dbReference>
<dbReference type="InterPro" id="IPR013785">
    <property type="entry name" value="Aldolase_TIM"/>
</dbReference>
<dbReference type="InterPro" id="IPR006062">
    <property type="entry name" value="His_biosynth"/>
</dbReference>
<dbReference type="InterPro" id="IPR006063">
    <property type="entry name" value="HisA_bact_arch"/>
</dbReference>
<dbReference type="InterPro" id="IPR044524">
    <property type="entry name" value="Isoase_HisA-like"/>
</dbReference>
<dbReference type="InterPro" id="IPR023016">
    <property type="entry name" value="Isoase_HisA-like_bact"/>
</dbReference>
<dbReference type="InterPro" id="IPR011060">
    <property type="entry name" value="RibuloseP-bd_barrel"/>
</dbReference>
<dbReference type="NCBIfam" id="TIGR00007">
    <property type="entry name" value="1-(5-phosphoribosyl)-5-[(5-phosphoribosylamino)methylideneamino]imidazole-4-carboxamide isomerase"/>
    <property type="match status" value="1"/>
</dbReference>
<dbReference type="PANTHER" id="PTHR43090">
    <property type="entry name" value="1-(5-PHOSPHORIBOSYL)-5-[(5-PHOSPHORIBOSYLAMINO)METHYLIDENEAMINO] IMIDAZOLE-4-CARBOXAMIDE ISOMERASE"/>
    <property type="match status" value="1"/>
</dbReference>
<dbReference type="PANTHER" id="PTHR43090:SF2">
    <property type="entry name" value="1-(5-PHOSPHORIBOSYL)-5-[(5-PHOSPHORIBOSYLAMINO)METHYLIDENEAMINO] IMIDAZOLE-4-CARBOXAMIDE ISOMERASE"/>
    <property type="match status" value="1"/>
</dbReference>
<dbReference type="Pfam" id="PF00977">
    <property type="entry name" value="His_biosynth"/>
    <property type="match status" value="1"/>
</dbReference>
<dbReference type="SUPFAM" id="SSF51366">
    <property type="entry name" value="Ribulose-phoshate binding barrel"/>
    <property type="match status" value="1"/>
</dbReference>